<comment type="function">
    <text evidence="3 4 8">O-methyltransferase; part of the gene cluster that mediates the biosynthesis of cichorine, a phytotoxin active against knapweed, corn, and soybeans (PubMed:24244835). The first step in the pathway is performed by the non-reducing polyketide synthase pkbA that condenses one acetyl-CoA starter unit with 3 malonyl-CoA units (PubMed:22510154). PkbA also catalyzes one methylation step to produce 3-methylorsellinate (PubMed:22510154). The nonribosomal peptide synthase-like protein cicB, the cytochrome P450 monooxygenase cicH and the O-methyltransferase cicE are involved in the conversion of 3-methylorsellinate into nidulol (PubMed:24244835). CicB converts 3-methylorsellinate to a yet unidentified intermediate, cicH may play a ring-closing role for cichorine and cicE is plausibly responsible for the methylation of one of the phenol groups (Probable). The oxidoreductase cicC acts downstream with still unidentified enzymes to further convert nidulol into cichorine (PubMed:24244835).</text>
</comment>
<comment type="pathway">
    <text evidence="4">Phytotoxin biosynthesis.</text>
</comment>
<comment type="disruption phenotype">
    <text evidence="4">Abolishes the production of cichorine.</text>
</comment>
<comment type="biotechnology">
    <text evidence="5">Cichorine and its derivatives are promising in the course of developing novel herbicides.</text>
</comment>
<comment type="similarity">
    <text evidence="7">Belongs to the class I-like SAM-binding methyltransferase superfamily. Cation-independent O-methyltransferase family.</text>
</comment>
<protein>
    <recommendedName>
        <fullName evidence="6">O-methyltransferase cicE</fullName>
        <ecNumber evidence="2">2.1.1.-</ecNumber>
    </recommendedName>
    <alternativeName>
        <fullName evidence="6">Cichorine biosynthesis cluster protein E</fullName>
    </alternativeName>
</protein>
<accession>A0A1U8QH20</accession>
<accession>C8V0D6</accession>
<accession>Q5AZ33</accession>
<name>CICE_EMENI</name>
<gene>
    <name evidence="6" type="primary">cicE</name>
    <name type="ORF">AN6447</name>
    <name type="ORF">ANIA_06447</name>
</gene>
<keyword id="KW-0489">Methyltransferase</keyword>
<keyword id="KW-1185">Reference proteome</keyword>
<keyword id="KW-0949">S-adenosyl-L-methionine</keyword>
<keyword id="KW-0808">Transferase</keyword>
<reference key="1">
    <citation type="journal article" date="2005" name="Nature">
        <title>Sequencing of Aspergillus nidulans and comparative analysis with A. fumigatus and A. oryzae.</title>
        <authorList>
            <person name="Galagan J.E."/>
            <person name="Calvo S.E."/>
            <person name="Cuomo C."/>
            <person name="Ma L.-J."/>
            <person name="Wortman J.R."/>
            <person name="Batzoglou S."/>
            <person name="Lee S.-I."/>
            <person name="Bastuerkmen M."/>
            <person name="Spevak C.C."/>
            <person name="Clutterbuck J."/>
            <person name="Kapitonov V."/>
            <person name="Jurka J."/>
            <person name="Scazzocchio C."/>
            <person name="Farman M.L."/>
            <person name="Butler J."/>
            <person name="Purcell S."/>
            <person name="Harris S."/>
            <person name="Braus G.H."/>
            <person name="Draht O."/>
            <person name="Busch S."/>
            <person name="D'Enfert C."/>
            <person name="Bouchier C."/>
            <person name="Goldman G.H."/>
            <person name="Bell-Pedersen D."/>
            <person name="Griffiths-Jones S."/>
            <person name="Doonan J.H."/>
            <person name="Yu J."/>
            <person name="Vienken K."/>
            <person name="Pain A."/>
            <person name="Freitag M."/>
            <person name="Selker E.U."/>
            <person name="Archer D.B."/>
            <person name="Penalva M.A."/>
            <person name="Oakley B.R."/>
            <person name="Momany M."/>
            <person name="Tanaka T."/>
            <person name="Kumagai T."/>
            <person name="Asai K."/>
            <person name="Machida M."/>
            <person name="Nierman W.C."/>
            <person name="Denning D.W."/>
            <person name="Caddick M.X."/>
            <person name="Hynes M."/>
            <person name="Paoletti M."/>
            <person name="Fischer R."/>
            <person name="Miller B.L."/>
            <person name="Dyer P.S."/>
            <person name="Sachs M.S."/>
            <person name="Osmani S.A."/>
            <person name="Birren B.W."/>
        </authorList>
    </citation>
    <scope>NUCLEOTIDE SEQUENCE [LARGE SCALE GENOMIC DNA]</scope>
    <source>
        <strain>FGSC A4 / ATCC 38163 / CBS 112.46 / NRRL 194 / M139</strain>
    </source>
</reference>
<reference key="2">
    <citation type="journal article" date="2009" name="Fungal Genet. Biol.">
        <title>The 2008 update of the Aspergillus nidulans genome annotation: a community effort.</title>
        <authorList>
            <person name="Wortman J.R."/>
            <person name="Gilsenan J.M."/>
            <person name="Joardar V."/>
            <person name="Deegan J."/>
            <person name="Clutterbuck J."/>
            <person name="Andersen M.R."/>
            <person name="Archer D."/>
            <person name="Bencina M."/>
            <person name="Braus G."/>
            <person name="Coutinho P."/>
            <person name="von Dohren H."/>
            <person name="Doonan J."/>
            <person name="Driessen A.J."/>
            <person name="Durek P."/>
            <person name="Espeso E."/>
            <person name="Fekete E."/>
            <person name="Flipphi M."/>
            <person name="Estrada C.G."/>
            <person name="Geysens S."/>
            <person name="Goldman G."/>
            <person name="de Groot P.W."/>
            <person name="Hansen K."/>
            <person name="Harris S.D."/>
            <person name="Heinekamp T."/>
            <person name="Helmstaedt K."/>
            <person name="Henrissat B."/>
            <person name="Hofmann G."/>
            <person name="Homan T."/>
            <person name="Horio T."/>
            <person name="Horiuchi H."/>
            <person name="James S."/>
            <person name="Jones M."/>
            <person name="Karaffa L."/>
            <person name="Karanyi Z."/>
            <person name="Kato M."/>
            <person name="Keller N."/>
            <person name="Kelly D.E."/>
            <person name="Kiel J.A."/>
            <person name="Kim J.M."/>
            <person name="van der Klei I.J."/>
            <person name="Klis F.M."/>
            <person name="Kovalchuk A."/>
            <person name="Krasevec N."/>
            <person name="Kubicek C.P."/>
            <person name="Liu B."/>
            <person name="Maccabe A."/>
            <person name="Meyer V."/>
            <person name="Mirabito P."/>
            <person name="Miskei M."/>
            <person name="Mos M."/>
            <person name="Mullins J."/>
            <person name="Nelson D.R."/>
            <person name="Nielsen J."/>
            <person name="Oakley B.R."/>
            <person name="Osmani S.A."/>
            <person name="Pakula T."/>
            <person name="Paszewski A."/>
            <person name="Paulsen I."/>
            <person name="Pilsyk S."/>
            <person name="Pocsi I."/>
            <person name="Punt P.J."/>
            <person name="Ram A.F."/>
            <person name="Ren Q."/>
            <person name="Robellet X."/>
            <person name="Robson G."/>
            <person name="Seiboth B."/>
            <person name="van Solingen P."/>
            <person name="Specht T."/>
            <person name="Sun J."/>
            <person name="Taheri-Talesh N."/>
            <person name="Takeshita N."/>
            <person name="Ussery D."/>
            <person name="vanKuyk P.A."/>
            <person name="Visser H."/>
            <person name="van de Vondervoort P.J."/>
            <person name="de Vries R.P."/>
            <person name="Walton J."/>
            <person name="Xiang X."/>
            <person name="Xiong Y."/>
            <person name="Zeng A.P."/>
            <person name="Brandt B.W."/>
            <person name="Cornell M.J."/>
            <person name="van den Hondel C.A."/>
            <person name="Visser J."/>
            <person name="Oliver S.G."/>
            <person name="Turner G."/>
        </authorList>
    </citation>
    <scope>GENOME REANNOTATION</scope>
    <source>
        <strain>FGSC A4 / ATCC 38163 / CBS 112.46 / NRRL 194 / M139</strain>
    </source>
</reference>
<reference key="3">
    <citation type="journal article" date="2012" name="J. Am. Chem. Soc.">
        <title>Illuminating the diversity of aromatic polyketide synthases in Aspergillus nidulans.</title>
        <authorList>
            <person name="Ahuja M."/>
            <person name="Chiang Y.M."/>
            <person name="Chang S.L."/>
            <person name="Praseuth M.B."/>
            <person name="Entwistle R."/>
            <person name="Sanchez J.F."/>
            <person name="Lo H.C."/>
            <person name="Yeh H.H."/>
            <person name="Oakley B.R."/>
            <person name="Wang C.C."/>
        </authorList>
    </citation>
    <scope>FUNCTION</scope>
</reference>
<reference key="4">
    <citation type="journal article" date="2012" name="Med. Chem. Commun.">
        <title>Identification and molecular genetic analysis of the cichorine gene cluster in Aspergillus nidulans.</title>
        <authorList>
            <person name="Sanchez J.F."/>
            <person name="Entwistle R."/>
            <person name="Corcoran D."/>
            <person name="Oakley B.R."/>
            <person name="Wang C.C."/>
        </authorList>
    </citation>
    <scope>FUNCTION</scope>
    <scope>DISRUPTION PHENOTYPE</scope>
    <scope>PATHWAY</scope>
</reference>
<reference key="5">
    <citation type="journal article" date="2019" name="Molecules">
        <title>Discovery of three new phytotoxins from the fungus Aspergillus nidulans by pathway inactivation.</title>
        <authorList>
            <person name="Liao L."/>
            <person name="Zhang X."/>
            <person name="Lou Y."/>
            <person name="Zhou C."/>
            <person name="Yuan Q."/>
            <person name="Gao J."/>
        </authorList>
    </citation>
    <scope>BIOTECHNOLOGY</scope>
</reference>
<dbReference type="EC" id="2.1.1.-" evidence="2"/>
<dbReference type="EMBL" id="BN001301">
    <property type="protein sequence ID" value="CBF69453.1"/>
    <property type="molecule type" value="Genomic_DNA"/>
</dbReference>
<dbReference type="EMBL" id="AACD01000108">
    <property type="protein sequence ID" value="EAA58469.1"/>
    <property type="molecule type" value="Genomic_DNA"/>
</dbReference>
<dbReference type="RefSeq" id="XP_664051.1">
    <property type="nucleotide sequence ID" value="XM_658959.1"/>
</dbReference>
<dbReference type="SMR" id="A0A1U8QH20"/>
<dbReference type="STRING" id="227321.Q5AZ33"/>
<dbReference type="EnsemblFungi" id="CBF69453">
    <property type="protein sequence ID" value="CBF69453"/>
    <property type="gene ID" value="ANIA_06447"/>
</dbReference>
<dbReference type="GeneID" id="2871346"/>
<dbReference type="KEGG" id="ani:ANIA_06447"/>
<dbReference type="eggNOG" id="ENOG502S7DY">
    <property type="taxonomic scope" value="Eukaryota"/>
</dbReference>
<dbReference type="HOGENOM" id="CLU_005533_0_1_1"/>
<dbReference type="InParanoid" id="A0A1U8QH20"/>
<dbReference type="OMA" id="PLPANWG"/>
<dbReference type="OrthoDB" id="1606438at2759"/>
<dbReference type="Proteomes" id="UP000000560">
    <property type="component" value="Chromosome I"/>
</dbReference>
<dbReference type="GO" id="GO:0008171">
    <property type="term" value="F:O-methyltransferase activity"/>
    <property type="evidence" value="ECO:0007669"/>
    <property type="project" value="InterPro"/>
</dbReference>
<dbReference type="GO" id="GO:0046983">
    <property type="term" value="F:protein dimerization activity"/>
    <property type="evidence" value="ECO:0007669"/>
    <property type="project" value="InterPro"/>
</dbReference>
<dbReference type="GO" id="GO:0062032">
    <property type="term" value="P:cichorine biosynthetic process"/>
    <property type="evidence" value="ECO:0000315"/>
    <property type="project" value="GO_Central"/>
</dbReference>
<dbReference type="GO" id="GO:0032259">
    <property type="term" value="P:methylation"/>
    <property type="evidence" value="ECO:0007669"/>
    <property type="project" value="UniProtKB-KW"/>
</dbReference>
<dbReference type="Gene3D" id="3.40.50.150">
    <property type="entry name" value="Vaccinia Virus protein VP39"/>
    <property type="match status" value="1"/>
</dbReference>
<dbReference type="Gene3D" id="1.10.10.10">
    <property type="entry name" value="Winged helix-like DNA-binding domain superfamily/Winged helix DNA-binding domain"/>
    <property type="match status" value="1"/>
</dbReference>
<dbReference type="InterPro" id="IPR016461">
    <property type="entry name" value="COMT-like"/>
</dbReference>
<dbReference type="InterPro" id="IPR001077">
    <property type="entry name" value="O_MeTrfase_dom"/>
</dbReference>
<dbReference type="InterPro" id="IPR012967">
    <property type="entry name" value="Plant_O-MeTrfase_dimerisation"/>
</dbReference>
<dbReference type="InterPro" id="IPR029063">
    <property type="entry name" value="SAM-dependent_MTases_sf"/>
</dbReference>
<dbReference type="InterPro" id="IPR036388">
    <property type="entry name" value="WH-like_DNA-bd_sf"/>
</dbReference>
<dbReference type="InterPro" id="IPR036390">
    <property type="entry name" value="WH_DNA-bd_sf"/>
</dbReference>
<dbReference type="PANTHER" id="PTHR43712:SF2">
    <property type="entry name" value="O-METHYLTRANSFERASE CICE"/>
    <property type="match status" value="1"/>
</dbReference>
<dbReference type="PANTHER" id="PTHR43712">
    <property type="entry name" value="PUTATIVE (AFU_ORTHOLOGUE AFUA_4G14580)-RELATED"/>
    <property type="match status" value="1"/>
</dbReference>
<dbReference type="Pfam" id="PF08100">
    <property type="entry name" value="Dimerisation"/>
    <property type="match status" value="1"/>
</dbReference>
<dbReference type="Pfam" id="PF00891">
    <property type="entry name" value="Methyltransf_2"/>
    <property type="match status" value="1"/>
</dbReference>
<dbReference type="SUPFAM" id="SSF53335">
    <property type="entry name" value="S-adenosyl-L-methionine-dependent methyltransferases"/>
    <property type="match status" value="1"/>
</dbReference>
<dbReference type="SUPFAM" id="SSF46785">
    <property type="entry name" value="Winged helix' DNA-binding domain"/>
    <property type="match status" value="1"/>
</dbReference>
<dbReference type="PROSITE" id="PS51683">
    <property type="entry name" value="SAM_OMT_II"/>
    <property type="match status" value="1"/>
</dbReference>
<organism>
    <name type="scientific">Emericella nidulans (strain FGSC A4 / ATCC 38163 / CBS 112.46 / NRRL 194 / M139)</name>
    <name type="common">Aspergillus nidulans</name>
    <dbReference type="NCBI Taxonomy" id="227321"/>
    <lineage>
        <taxon>Eukaryota</taxon>
        <taxon>Fungi</taxon>
        <taxon>Dikarya</taxon>
        <taxon>Ascomycota</taxon>
        <taxon>Pezizomycotina</taxon>
        <taxon>Eurotiomycetes</taxon>
        <taxon>Eurotiomycetidae</taxon>
        <taxon>Eurotiales</taxon>
        <taxon>Aspergillaceae</taxon>
        <taxon>Aspergillus</taxon>
        <taxon>Aspergillus subgen. Nidulantes</taxon>
    </lineage>
</organism>
<sequence>MERFPRSAADAQQLLQLAELFKQSAEIIAEEWNKEDFSRIKAETNSIKSNLGSLDTARILPSPRLHEATRTVLAITGAATELVAEPYSRIQEVACQYFESRALFVAAERRIPDLLAGAGEYGLSVGEIAEATGIEERKLSRILRCLCSIHIFRQIGTDRFANNRISAALKNNEPLRAYVQLFNLDIYTASDQLPKYLLSSQGASYKVHETAWQKAVGTTKARWDWLAERVSLDEVRPKEAPYPGLPDVRHLQPGPDGKYARPELDNFGLAMVGGGKVSGAAHAYDFPWASLGDALVVDVGGGVGGFVLQLLPAYPQLRYIVQDRAEVLQQAQEEIWPVEAPEAVADGRVQFMEHNFFQPNPVKGADVYWLRGIFYCVQILSALRTSMAPTSRILVCDQVMNTTAGCDEIPPAPSPLPANYGYYMRYPHHRDLAMMSIINGIERTPAQFTELVKQAGLKVNKIWNCRSMVGIVEIGLKNEKDRHHRRLSYMGFGNYTQLGIGFFSSAKGPVRDELQADEQA</sequence>
<feature type="chain" id="PRO_0000450886" description="O-methyltransferase cicE">
    <location>
        <begin position="1"/>
        <end position="520"/>
    </location>
</feature>
<feature type="binding site" evidence="1">
    <location>
        <begin position="300"/>
        <end position="301"/>
    </location>
    <ligand>
        <name>S-adenosyl-L-methionine</name>
        <dbReference type="ChEBI" id="CHEBI:59789"/>
    </ligand>
</feature>
<feature type="binding site" evidence="2">
    <location>
        <position position="323"/>
    </location>
    <ligand>
        <name>S-adenosyl-L-methionine</name>
        <dbReference type="ChEBI" id="CHEBI:59789"/>
    </ligand>
</feature>
<feature type="binding site" evidence="1">
    <location>
        <begin position="355"/>
        <end position="356"/>
    </location>
    <ligand>
        <name>S-adenosyl-L-methionine</name>
        <dbReference type="ChEBI" id="CHEBI:59789"/>
    </ligand>
</feature>
<feature type="binding site" evidence="1">
    <location>
        <position position="371"/>
    </location>
    <ligand>
        <name>S-adenosyl-L-methionine</name>
        <dbReference type="ChEBI" id="CHEBI:59789"/>
    </ligand>
</feature>
<proteinExistence type="evidence at protein level"/>
<evidence type="ECO:0000250" key="1">
    <source>
        <dbReference type="UniProtKB" id="O04385"/>
    </source>
</evidence>
<evidence type="ECO:0000255" key="2">
    <source>
        <dbReference type="PROSITE-ProRule" id="PRU01020"/>
    </source>
</evidence>
<evidence type="ECO:0000269" key="3">
    <source>
    </source>
</evidence>
<evidence type="ECO:0000269" key="4">
    <source>
    </source>
</evidence>
<evidence type="ECO:0000269" key="5">
    <source>
    </source>
</evidence>
<evidence type="ECO:0000303" key="6">
    <source>
    </source>
</evidence>
<evidence type="ECO:0000305" key="7"/>
<evidence type="ECO:0000305" key="8">
    <source>
    </source>
</evidence>